<dbReference type="EMBL" id="BX571857">
    <property type="protein sequence ID" value="CAG43391.1"/>
    <property type="molecule type" value="Genomic_DNA"/>
</dbReference>
<dbReference type="SMR" id="Q6G8R5"/>
<dbReference type="KEGG" id="sas:SAS1589"/>
<dbReference type="HOGENOM" id="CLU_073529_0_2_9"/>
<dbReference type="GO" id="GO:0046872">
    <property type="term" value="F:metal ion binding"/>
    <property type="evidence" value="ECO:0007669"/>
    <property type="project" value="UniProtKB-KW"/>
</dbReference>
<dbReference type="GO" id="GO:0008237">
    <property type="term" value="F:metallopeptidase activity"/>
    <property type="evidence" value="ECO:0007669"/>
    <property type="project" value="UniProtKB-KW"/>
</dbReference>
<dbReference type="GO" id="GO:0006508">
    <property type="term" value="P:proteolysis"/>
    <property type="evidence" value="ECO:0007669"/>
    <property type="project" value="UniProtKB-KW"/>
</dbReference>
<dbReference type="CDD" id="cd08071">
    <property type="entry name" value="MPN_DUF2466"/>
    <property type="match status" value="1"/>
</dbReference>
<dbReference type="Gene3D" id="3.40.140.10">
    <property type="entry name" value="Cytidine Deaminase, domain 2"/>
    <property type="match status" value="1"/>
</dbReference>
<dbReference type="InterPro" id="IPR037518">
    <property type="entry name" value="MPN"/>
</dbReference>
<dbReference type="InterPro" id="IPR025657">
    <property type="entry name" value="RadC_JAB"/>
</dbReference>
<dbReference type="InterPro" id="IPR010994">
    <property type="entry name" value="RuvA_2-like"/>
</dbReference>
<dbReference type="InterPro" id="IPR001405">
    <property type="entry name" value="UPF0758"/>
</dbReference>
<dbReference type="InterPro" id="IPR020891">
    <property type="entry name" value="UPF0758_CS"/>
</dbReference>
<dbReference type="InterPro" id="IPR046778">
    <property type="entry name" value="UPF0758_N"/>
</dbReference>
<dbReference type="NCBIfam" id="NF000642">
    <property type="entry name" value="PRK00024.1"/>
    <property type="match status" value="1"/>
</dbReference>
<dbReference type="NCBIfam" id="TIGR00608">
    <property type="entry name" value="radc"/>
    <property type="match status" value="1"/>
</dbReference>
<dbReference type="PANTHER" id="PTHR30471">
    <property type="entry name" value="DNA REPAIR PROTEIN RADC"/>
    <property type="match status" value="1"/>
</dbReference>
<dbReference type="PANTHER" id="PTHR30471:SF3">
    <property type="entry name" value="UPF0758 PROTEIN YEES-RELATED"/>
    <property type="match status" value="1"/>
</dbReference>
<dbReference type="Pfam" id="PF04002">
    <property type="entry name" value="RadC"/>
    <property type="match status" value="1"/>
</dbReference>
<dbReference type="Pfam" id="PF20582">
    <property type="entry name" value="UPF0758_N"/>
    <property type="match status" value="1"/>
</dbReference>
<dbReference type="SUPFAM" id="SSF102712">
    <property type="entry name" value="JAB1/MPN domain"/>
    <property type="match status" value="1"/>
</dbReference>
<dbReference type="SUPFAM" id="SSF47781">
    <property type="entry name" value="RuvA domain 2-like"/>
    <property type="match status" value="1"/>
</dbReference>
<dbReference type="PROSITE" id="PS50249">
    <property type="entry name" value="MPN"/>
    <property type="match status" value="1"/>
</dbReference>
<dbReference type="PROSITE" id="PS01302">
    <property type="entry name" value="UPF0758"/>
    <property type="match status" value="1"/>
</dbReference>
<keyword id="KW-0378">Hydrolase</keyword>
<keyword id="KW-0479">Metal-binding</keyword>
<keyword id="KW-0482">Metalloprotease</keyword>
<keyword id="KW-0645">Protease</keyword>
<keyword id="KW-0862">Zinc</keyword>
<proteinExistence type="inferred from homology"/>
<evidence type="ECO:0000255" key="1">
    <source>
        <dbReference type="PROSITE-ProRule" id="PRU01182"/>
    </source>
</evidence>
<evidence type="ECO:0000305" key="2"/>
<sequence length="228" mass="25311">MKIKEMVTSEMPRERLLSHGAKSLSNTELLAILINTGRKGFSSIDISNELLKSASNLNELKKSSINDLIKVKGIGLQKAITLKAAFELGERMGRRAENNRIKITQPSDVADYMIPTMKDLTQEHFVILLLNSKNVVIKETCVFKGTLNSSIVHPREIFSIAVRENANAIIAVHNHPSGDVTPSQEDIITTMRLKECGLILGIDLLDHIIIGDNRFTSLVEAGYFDEND</sequence>
<name>Y1589_STAAS</name>
<comment type="similarity">
    <text evidence="2">Belongs to the UPF0758 family.</text>
</comment>
<feature type="chain" id="PRO_0000190732" description="UPF0758 protein SAS1589">
    <location>
        <begin position="1"/>
        <end position="228"/>
    </location>
</feature>
<feature type="domain" description="MPN" evidence="1">
    <location>
        <begin position="102"/>
        <end position="224"/>
    </location>
</feature>
<feature type="short sequence motif" description="JAMM motif" evidence="1">
    <location>
        <begin position="173"/>
        <end position="186"/>
    </location>
</feature>
<feature type="binding site" evidence="1">
    <location>
        <position position="173"/>
    </location>
    <ligand>
        <name>Zn(2+)</name>
        <dbReference type="ChEBI" id="CHEBI:29105"/>
        <note>catalytic</note>
    </ligand>
</feature>
<feature type="binding site" evidence="1">
    <location>
        <position position="175"/>
    </location>
    <ligand>
        <name>Zn(2+)</name>
        <dbReference type="ChEBI" id="CHEBI:29105"/>
        <note>catalytic</note>
    </ligand>
</feature>
<feature type="binding site" evidence="1">
    <location>
        <position position="186"/>
    </location>
    <ligand>
        <name>Zn(2+)</name>
        <dbReference type="ChEBI" id="CHEBI:29105"/>
        <note>catalytic</note>
    </ligand>
</feature>
<gene>
    <name type="ordered locus">SAS1589</name>
</gene>
<protein>
    <recommendedName>
        <fullName>UPF0758 protein SAS1589</fullName>
    </recommendedName>
</protein>
<organism>
    <name type="scientific">Staphylococcus aureus (strain MSSA476)</name>
    <dbReference type="NCBI Taxonomy" id="282459"/>
    <lineage>
        <taxon>Bacteria</taxon>
        <taxon>Bacillati</taxon>
        <taxon>Bacillota</taxon>
        <taxon>Bacilli</taxon>
        <taxon>Bacillales</taxon>
        <taxon>Staphylococcaceae</taxon>
        <taxon>Staphylococcus</taxon>
    </lineage>
</organism>
<accession>Q6G8R5</accession>
<reference key="1">
    <citation type="journal article" date="2004" name="Proc. Natl. Acad. Sci. U.S.A.">
        <title>Complete genomes of two clinical Staphylococcus aureus strains: evidence for the rapid evolution of virulence and drug resistance.</title>
        <authorList>
            <person name="Holden M.T.G."/>
            <person name="Feil E.J."/>
            <person name="Lindsay J.A."/>
            <person name="Peacock S.J."/>
            <person name="Day N.P.J."/>
            <person name="Enright M.C."/>
            <person name="Foster T.J."/>
            <person name="Moore C.E."/>
            <person name="Hurst L."/>
            <person name="Atkin R."/>
            <person name="Barron A."/>
            <person name="Bason N."/>
            <person name="Bentley S.D."/>
            <person name="Chillingworth C."/>
            <person name="Chillingworth T."/>
            <person name="Churcher C."/>
            <person name="Clark L."/>
            <person name="Corton C."/>
            <person name="Cronin A."/>
            <person name="Doggett J."/>
            <person name="Dowd L."/>
            <person name="Feltwell T."/>
            <person name="Hance Z."/>
            <person name="Harris B."/>
            <person name="Hauser H."/>
            <person name="Holroyd S."/>
            <person name="Jagels K."/>
            <person name="James K.D."/>
            <person name="Lennard N."/>
            <person name="Line A."/>
            <person name="Mayes R."/>
            <person name="Moule S."/>
            <person name="Mungall K."/>
            <person name="Ormond D."/>
            <person name="Quail M.A."/>
            <person name="Rabbinowitsch E."/>
            <person name="Rutherford K.M."/>
            <person name="Sanders M."/>
            <person name="Sharp S."/>
            <person name="Simmonds M."/>
            <person name="Stevens K."/>
            <person name="Whitehead S."/>
            <person name="Barrell B.G."/>
            <person name="Spratt B.G."/>
            <person name="Parkhill J."/>
        </authorList>
    </citation>
    <scope>NUCLEOTIDE SEQUENCE [LARGE SCALE GENOMIC DNA]</scope>
    <source>
        <strain>MSSA476</strain>
    </source>
</reference>